<sequence>MQLMEYTQLALFLGLLALMSPVLGRFIGRAVLRGEQTWLHSVLGPVERLIYRASGIRPEARQSWRQYAASLCAFSAAGFLMTFGVLMLQDKLPLNPQGFPGLSWHLAFNTAVSFLTNTNWQSYAGESTVSHFSQLVGLAYHNFVSAAAGLAVAVAVMRGLASQESKTIGNFWADLVRSVLYVLLPISLVLAVVLVGQGVVQTMSAGTEVATLEGGHQFIAMGPTASQVAIKMLGTNGGGFFNANAAHPLENPTALSNLLQMLAIFIIPSSLVFTLGEAVSNRRHAWTVWFVMACLFMVGTLSLYKAETLGTPLLTEVAQAPVTNMEGKEVRFGIFGSAMFATVTTDASCGAVNAMHDSLTPLGGLVTLVNMQMGEVIFGGVGSGLYGMVLFILLTVFLAGLMVGRTPDYLGKRIEGREVTLAMLALIIAATPPLLFSAVAAVSGWGQAALNNAGAHGFSEILYAYTSGVQNNGSAFAGLNANSPAWNVTLALAMLIGRFGVMLPMLGVAGSMASRKARPIGEFSFPVSGFTFGLLLTLVIVIVGALTYLPALALGPVVEHFQMLDGLLH</sequence>
<reference key="1">
    <citation type="journal article" date="2009" name="Environ. Microbiol.">
        <title>Contribution of mobile genetic elements to Desulfovibrio vulgaris genome plasticity.</title>
        <authorList>
            <person name="Walker C.B."/>
            <person name="Stolyar S."/>
            <person name="Chivian D."/>
            <person name="Pinel N."/>
            <person name="Gabster J.A."/>
            <person name="Dehal P.S."/>
            <person name="He Z."/>
            <person name="Yang Z.K."/>
            <person name="Yen H.C."/>
            <person name="Zhou J."/>
            <person name="Wall J.D."/>
            <person name="Hazen T.C."/>
            <person name="Arkin A.P."/>
            <person name="Stahl D.A."/>
        </authorList>
    </citation>
    <scope>NUCLEOTIDE SEQUENCE [LARGE SCALE GENOMIC DNA]</scope>
    <source>
        <strain>DP4</strain>
    </source>
</reference>
<name>KDPA_NITV4</name>
<comment type="function">
    <text evidence="1">Part of the high-affinity ATP-driven potassium transport (or Kdp) system, which catalyzes the hydrolysis of ATP coupled with the electrogenic transport of potassium into the cytoplasm. This subunit binds the periplasmic potassium ions and delivers the ions to the membrane domain of KdpB through an intramembrane tunnel.</text>
</comment>
<comment type="subunit">
    <text evidence="1">The system is composed of three essential subunits: KdpA, KdpB and KdpC.</text>
</comment>
<comment type="subcellular location">
    <subcellularLocation>
        <location evidence="1">Cell inner membrane</location>
        <topology evidence="1">Multi-pass membrane protein</topology>
    </subcellularLocation>
</comment>
<comment type="similarity">
    <text evidence="1">Belongs to the KdpA family.</text>
</comment>
<accession>A1V9G1</accession>
<proteinExistence type="inferred from homology"/>
<dbReference type="EMBL" id="CP000527">
    <property type="protein sequence ID" value="ABM27077.1"/>
    <property type="molecule type" value="Genomic_DNA"/>
</dbReference>
<dbReference type="RefSeq" id="WP_011791350.1">
    <property type="nucleotide sequence ID" value="NC_008751.1"/>
</dbReference>
<dbReference type="SMR" id="A1V9G1"/>
<dbReference type="KEGG" id="dvl:Dvul_0053"/>
<dbReference type="HOGENOM" id="CLU_018614_3_0_7"/>
<dbReference type="Proteomes" id="UP000009173">
    <property type="component" value="Chromosome"/>
</dbReference>
<dbReference type="GO" id="GO:0005886">
    <property type="term" value="C:plasma membrane"/>
    <property type="evidence" value="ECO:0007669"/>
    <property type="project" value="UniProtKB-SubCell"/>
</dbReference>
<dbReference type="GO" id="GO:0008556">
    <property type="term" value="F:P-type potassium transmembrane transporter activity"/>
    <property type="evidence" value="ECO:0007669"/>
    <property type="project" value="InterPro"/>
</dbReference>
<dbReference type="GO" id="GO:0030955">
    <property type="term" value="F:potassium ion binding"/>
    <property type="evidence" value="ECO:0007669"/>
    <property type="project" value="UniProtKB-UniRule"/>
</dbReference>
<dbReference type="HAMAP" id="MF_00275">
    <property type="entry name" value="KdpA"/>
    <property type="match status" value="1"/>
</dbReference>
<dbReference type="InterPro" id="IPR004623">
    <property type="entry name" value="KdpA"/>
</dbReference>
<dbReference type="NCBIfam" id="TIGR00680">
    <property type="entry name" value="kdpA"/>
    <property type="match status" value="1"/>
</dbReference>
<dbReference type="PANTHER" id="PTHR30607">
    <property type="entry name" value="POTASSIUM-TRANSPORTING ATPASE A CHAIN"/>
    <property type="match status" value="1"/>
</dbReference>
<dbReference type="PANTHER" id="PTHR30607:SF2">
    <property type="entry name" value="POTASSIUM-TRANSPORTING ATPASE POTASSIUM-BINDING SUBUNIT"/>
    <property type="match status" value="1"/>
</dbReference>
<dbReference type="Pfam" id="PF03814">
    <property type="entry name" value="KdpA"/>
    <property type="match status" value="1"/>
</dbReference>
<dbReference type="PIRSF" id="PIRSF001294">
    <property type="entry name" value="K_ATPaseA"/>
    <property type="match status" value="1"/>
</dbReference>
<organism>
    <name type="scientific">Nitratidesulfovibrio vulgaris (strain DP4)</name>
    <name type="common">Desulfovibrio vulgaris</name>
    <dbReference type="NCBI Taxonomy" id="391774"/>
    <lineage>
        <taxon>Bacteria</taxon>
        <taxon>Pseudomonadati</taxon>
        <taxon>Thermodesulfobacteriota</taxon>
        <taxon>Desulfovibrionia</taxon>
        <taxon>Desulfovibrionales</taxon>
        <taxon>Desulfovibrionaceae</taxon>
        <taxon>Nitratidesulfovibrio</taxon>
    </lineage>
</organism>
<evidence type="ECO:0000255" key="1">
    <source>
        <dbReference type="HAMAP-Rule" id="MF_00275"/>
    </source>
</evidence>
<feature type="chain" id="PRO_1000022219" description="Potassium-transporting ATPase potassium-binding subunit">
    <location>
        <begin position="1"/>
        <end position="569"/>
    </location>
</feature>
<feature type="transmembrane region" description="Helical" evidence="1">
    <location>
        <begin position="3"/>
        <end position="23"/>
    </location>
</feature>
<feature type="transmembrane region" description="Helical" evidence="1">
    <location>
        <begin position="68"/>
        <end position="88"/>
    </location>
</feature>
<feature type="transmembrane region" description="Helical" evidence="1">
    <location>
        <begin position="136"/>
        <end position="156"/>
    </location>
</feature>
<feature type="transmembrane region" description="Helical" evidence="1">
    <location>
        <begin position="179"/>
        <end position="199"/>
    </location>
</feature>
<feature type="transmembrane region" description="Helical" evidence="1">
    <location>
        <begin position="259"/>
        <end position="279"/>
    </location>
</feature>
<feature type="transmembrane region" description="Helical" evidence="1">
    <location>
        <begin position="284"/>
        <end position="304"/>
    </location>
</feature>
<feature type="transmembrane region" description="Helical" evidence="1">
    <location>
        <begin position="384"/>
        <end position="404"/>
    </location>
</feature>
<feature type="transmembrane region" description="Helical" evidence="1">
    <location>
        <begin position="422"/>
        <end position="442"/>
    </location>
</feature>
<feature type="transmembrane region" description="Helical" evidence="1">
    <location>
        <begin position="490"/>
        <end position="510"/>
    </location>
</feature>
<feature type="transmembrane region" description="Helical" evidence="1">
    <location>
        <begin position="534"/>
        <end position="554"/>
    </location>
</feature>
<keyword id="KW-0997">Cell inner membrane</keyword>
<keyword id="KW-1003">Cell membrane</keyword>
<keyword id="KW-0406">Ion transport</keyword>
<keyword id="KW-0472">Membrane</keyword>
<keyword id="KW-0630">Potassium</keyword>
<keyword id="KW-0633">Potassium transport</keyword>
<keyword id="KW-0812">Transmembrane</keyword>
<keyword id="KW-1133">Transmembrane helix</keyword>
<keyword id="KW-0813">Transport</keyword>
<protein>
    <recommendedName>
        <fullName evidence="1">Potassium-transporting ATPase potassium-binding subunit</fullName>
    </recommendedName>
    <alternativeName>
        <fullName evidence="1">ATP phosphohydrolase [potassium-transporting] A chain</fullName>
    </alternativeName>
    <alternativeName>
        <fullName evidence="1">Potassium-binding and translocating subunit A</fullName>
    </alternativeName>
    <alternativeName>
        <fullName evidence="1">Potassium-translocating ATPase A chain</fullName>
    </alternativeName>
</protein>
<gene>
    <name evidence="1" type="primary">kdpA</name>
    <name type="ordered locus">Dvul_0053</name>
</gene>